<reference key="1">
    <citation type="submission" date="1998-12" db="EMBL/GenBank/DDBJ databases">
        <title>RS21-C6: a novel gene encoding a molecule relavent to TCR and CD3 expression of pre-T cells.</title>
        <authorList>
            <person name="Wang H."/>
            <person name="Chen W.F."/>
            <person name="Li Y."/>
            <person name="Jin C.G."/>
            <person name="Wang Y."/>
            <person name="Yu Q."/>
            <person name="Qian X.P."/>
        </authorList>
    </citation>
    <scope>NUCLEOTIDE SEQUENCE [MRNA]</scope>
    <source>
        <strain>BALB/cJ</strain>
    </source>
</reference>
<reference key="2">
    <citation type="journal article" date="2005" name="Science">
        <title>The transcriptional landscape of the mammalian genome.</title>
        <authorList>
            <person name="Carninci P."/>
            <person name="Kasukawa T."/>
            <person name="Katayama S."/>
            <person name="Gough J."/>
            <person name="Frith M.C."/>
            <person name="Maeda N."/>
            <person name="Oyama R."/>
            <person name="Ravasi T."/>
            <person name="Lenhard B."/>
            <person name="Wells C."/>
            <person name="Kodzius R."/>
            <person name="Shimokawa K."/>
            <person name="Bajic V.B."/>
            <person name="Brenner S.E."/>
            <person name="Batalov S."/>
            <person name="Forrest A.R."/>
            <person name="Zavolan M."/>
            <person name="Davis M.J."/>
            <person name="Wilming L.G."/>
            <person name="Aidinis V."/>
            <person name="Allen J.E."/>
            <person name="Ambesi-Impiombato A."/>
            <person name="Apweiler R."/>
            <person name="Aturaliya R.N."/>
            <person name="Bailey T.L."/>
            <person name="Bansal M."/>
            <person name="Baxter L."/>
            <person name="Beisel K.W."/>
            <person name="Bersano T."/>
            <person name="Bono H."/>
            <person name="Chalk A.M."/>
            <person name="Chiu K.P."/>
            <person name="Choudhary V."/>
            <person name="Christoffels A."/>
            <person name="Clutterbuck D.R."/>
            <person name="Crowe M.L."/>
            <person name="Dalla E."/>
            <person name="Dalrymple B.P."/>
            <person name="de Bono B."/>
            <person name="Della Gatta G."/>
            <person name="di Bernardo D."/>
            <person name="Down T."/>
            <person name="Engstrom P."/>
            <person name="Fagiolini M."/>
            <person name="Faulkner G."/>
            <person name="Fletcher C.F."/>
            <person name="Fukushima T."/>
            <person name="Furuno M."/>
            <person name="Futaki S."/>
            <person name="Gariboldi M."/>
            <person name="Georgii-Hemming P."/>
            <person name="Gingeras T.R."/>
            <person name="Gojobori T."/>
            <person name="Green R.E."/>
            <person name="Gustincich S."/>
            <person name="Harbers M."/>
            <person name="Hayashi Y."/>
            <person name="Hensch T.K."/>
            <person name="Hirokawa N."/>
            <person name="Hill D."/>
            <person name="Huminiecki L."/>
            <person name="Iacono M."/>
            <person name="Ikeo K."/>
            <person name="Iwama A."/>
            <person name="Ishikawa T."/>
            <person name="Jakt M."/>
            <person name="Kanapin A."/>
            <person name="Katoh M."/>
            <person name="Kawasawa Y."/>
            <person name="Kelso J."/>
            <person name="Kitamura H."/>
            <person name="Kitano H."/>
            <person name="Kollias G."/>
            <person name="Krishnan S.P."/>
            <person name="Kruger A."/>
            <person name="Kummerfeld S.K."/>
            <person name="Kurochkin I.V."/>
            <person name="Lareau L.F."/>
            <person name="Lazarevic D."/>
            <person name="Lipovich L."/>
            <person name="Liu J."/>
            <person name="Liuni S."/>
            <person name="McWilliam S."/>
            <person name="Madan Babu M."/>
            <person name="Madera M."/>
            <person name="Marchionni L."/>
            <person name="Matsuda H."/>
            <person name="Matsuzawa S."/>
            <person name="Miki H."/>
            <person name="Mignone F."/>
            <person name="Miyake S."/>
            <person name="Morris K."/>
            <person name="Mottagui-Tabar S."/>
            <person name="Mulder N."/>
            <person name="Nakano N."/>
            <person name="Nakauchi H."/>
            <person name="Ng P."/>
            <person name="Nilsson R."/>
            <person name="Nishiguchi S."/>
            <person name="Nishikawa S."/>
            <person name="Nori F."/>
            <person name="Ohara O."/>
            <person name="Okazaki Y."/>
            <person name="Orlando V."/>
            <person name="Pang K.C."/>
            <person name="Pavan W.J."/>
            <person name="Pavesi G."/>
            <person name="Pesole G."/>
            <person name="Petrovsky N."/>
            <person name="Piazza S."/>
            <person name="Reed J."/>
            <person name="Reid J.F."/>
            <person name="Ring B.Z."/>
            <person name="Ringwald M."/>
            <person name="Rost B."/>
            <person name="Ruan Y."/>
            <person name="Salzberg S.L."/>
            <person name="Sandelin A."/>
            <person name="Schneider C."/>
            <person name="Schoenbach C."/>
            <person name="Sekiguchi K."/>
            <person name="Semple C.A."/>
            <person name="Seno S."/>
            <person name="Sessa L."/>
            <person name="Sheng Y."/>
            <person name="Shibata Y."/>
            <person name="Shimada H."/>
            <person name="Shimada K."/>
            <person name="Silva D."/>
            <person name="Sinclair B."/>
            <person name="Sperling S."/>
            <person name="Stupka E."/>
            <person name="Sugiura K."/>
            <person name="Sultana R."/>
            <person name="Takenaka Y."/>
            <person name="Taki K."/>
            <person name="Tammoja K."/>
            <person name="Tan S.L."/>
            <person name="Tang S."/>
            <person name="Taylor M.S."/>
            <person name="Tegner J."/>
            <person name="Teichmann S.A."/>
            <person name="Ueda H.R."/>
            <person name="van Nimwegen E."/>
            <person name="Verardo R."/>
            <person name="Wei C.L."/>
            <person name="Yagi K."/>
            <person name="Yamanishi H."/>
            <person name="Zabarovsky E."/>
            <person name="Zhu S."/>
            <person name="Zimmer A."/>
            <person name="Hide W."/>
            <person name="Bult C."/>
            <person name="Grimmond S.M."/>
            <person name="Teasdale R.D."/>
            <person name="Liu E.T."/>
            <person name="Brusic V."/>
            <person name="Quackenbush J."/>
            <person name="Wahlestedt C."/>
            <person name="Mattick J.S."/>
            <person name="Hume D.A."/>
            <person name="Kai C."/>
            <person name="Sasaki D."/>
            <person name="Tomaru Y."/>
            <person name="Fukuda S."/>
            <person name="Kanamori-Katayama M."/>
            <person name="Suzuki M."/>
            <person name="Aoki J."/>
            <person name="Arakawa T."/>
            <person name="Iida J."/>
            <person name="Imamura K."/>
            <person name="Itoh M."/>
            <person name="Kato T."/>
            <person name="Kawaji H."/>
            <person name="Kawagashira N."/>
            <person name="Kawashima T."/>
            <person name="Kojima M."/>
            <person name="Kondo S."/>
            <person name="Konno H."/>
            <person name="Nakano K."/>
            <person name="Ninomiya N."/>
            <person name="Nishio T."/>
            <person name="Okada M."/>
            <person name="Plessy C."/>
            <person name="Shibata K."/>
            <person name="Shiraki T."/>
            <person name="Suzuki S."/>
            <person name="Tagami M."/>
            <person name="Waki K."/>
            <person name="Watahiki A."/>
            <person name="Okamura-Oho Y."/>
            <person name="Suzuki H."/>
            <person name="Kawai J."/>
            <person name="Hayashizaki Y."/>
        </authorList>
    </citation>
    <scope>NUCLEOTIDE SEQUENCE [LARGE SCALE MRNA]</scope>
    <source>
        <strain>C57BL/6J</strain>
    </source>
</reference>
<reference key="3">
    <citation type="journal article" date="2004" name="Genome Res.">
        <title>The status, quality, and expansion of the NIH full-length cDNA project: the Mammalian Gene Collection (MGC).</title>
        <authorList>
            <consortium name="The MGC Project Team"/>
        </authorList>
    </citation>
    <scope>NUCLEOTIDE SEQUENCE [LARGE SCALE MRNA]</scope>
    <source>
        <strain>FVB/N</strain>
        <tissue>Mammary tumor</tissue>
    </source>
</reference>
<reference key="4">
    <citation type="journal article" date="2009" name="FEBS J.">
        <title>Mouse RS21-C6 is a mammalian 2'-deoxycytidine 5'-triphosphate pyrophosphohydrolase that prefers 5-iodocytosine.</title>
        <authorList>
            <person name="Nonaka M."/>
            <person name="Tsuchimoto D."/>
            <person name="Sakumi K."/>
            <person name="Nakabeppu Y."/>
        </authorList>
    </citation>
    <scope>FUNCTION</scope>
    <scope>CATALYTIC ACTIVITY</scope>
    <scope>IDENTIFICATION BY MASS SPECTROMETRY</scope>
    <scope>SUBCELLULAR LOCATION</scope>
    <scope>BIOPHYSICOCHEMICAL PROPERTIES</scope>
    <scope>TISSUE SPECIFICITY</scope>
</reference>
<reference key="5">
    <citation type="journal article" date="2010" name="Cell">
        <title>A tissue-specific atlas of mouse protein phosphorylation and expression.</title>
        <authorList>
            <person name="Huttlin E.L."/>
            <person name="Jedrychowski M.P."/>
            <person name="Elias J.E."/>
            <person name="Goswami T."/>
            <person name="Rad R."/>
            <person name="Beausoleil S.A."/>
            <person name="Villen J."/>
            <person name="Haas W."/>
            <person name="Sowa M.E."/>
            <person name="Gygi S.P."/>
        </authorList>
    </citation>
    <scope>IDENTIFICATION BY MASS SPECTROMETRY [LARGE SCALE ANALYSIS]</scope>
    <source>
        <tissue>Heart</tissue>
        <tissue>Kidney</tissue>
        <tissue>Liver</tissue>
        <tissue>Lung</tissue>
        <tissue>Pancreas</tissue>
        <tissue>Spleen</tissue>
        <tissue>Testis</tissue>
    </source>
</reference>
<reference key="6">
    <citation type="submission" date="2005-07" db="PDB data bank">
        <title>X-ray structure of protein from Mus musculus mm.29898.</title>
        <authorList>
            <consortium name="Center for eukaryotic structural genomics (CESG)"/>
        </authorList>
    </citation>
    <scope>X-RAY CRYSTALLOGRAPHY (2.32 ANGSTROMS)</scope>
    <scope>SUBUNIT</scope>
</reference>
<reference key="7">
    <citation type="journal article" date="2007" name="J. Mol. Biol.">
        <title>Crystal structure of RS21-C6, involved in nucleoside triphosphate pyrophosphohydrolysis.</title>
        <authorList>
            <person name="Wu B."/>
            <person name="Liu Y."/>
            <person name="Zhao Q."/>
            <person name="Liao S."/>
            <person name="Zhang J."/>
            <person name="Bartlam M."/>
            <person name="Chen W."/>
            <person name="Rao Z."/>
        </authorList>
    </citation>
    <scope>X-RAY CRYSTALLOGRAPHY (2.2 ANGSTROMS) OF 20-126 IN COMPLEX WITH 5-METHYL DCTP</scope>
    <scope>SUBUNIT</scope>
    <scope>CATALYTIC ACTIVITY</scope>
    <scope>FUNCTION</scope>
    <scope>COFACTOR</scope>
    <scope>BIOPHYSICOCHEMICAL PROPERTIES</scope>
    <scope>ACTIVITY REGULATION</scope>
    <scope>MUTAGENESIS OF HIS-38; TRP-47; GLU-63; GLU-66; TRP-73; GLU-95; ASP-98 AND TYR-102</scope>
    <scope>MAGNESIUM-BINDING</scope>
</reference>
<reference key="8">
    <citation type="journal article" date="2007" name="Structure">
        <title>Ensemble refinement of protein crystal structures: validation and application.</title>
        <authorList>
            <person name="Levin E.J."/>
            <person name="Kondrashov D.A."/>
            <person name="Wesenberg G.E."/>
            <person name="Phillips G.N. Jr."/>
        </authorList>
    </citation>
    <scope>X-RAY CRYSTALLOGRAPHY (2.32 ANGSTROMS)</scope>
</reference>
<keyword id="KW-0002">3D-structure</keyword>
<keyword id="KW-0007">Acetylation</keyword>
<keyword id="KW-0963">Cytoplasm</keyword>
<keyword id="KW-0378">Hydrolase</keyword>
<keyword id="KW-0460">Magnesium</keyword>
<keyword id="KW-0479">Metal-binding</keyword>
<keyword id="KW-0547">Nucleotide-binding</keyword>
<keyword id="KW-0597">Phosphoprotein</keyword>
<keyword id="KW-1185">Reference proteome</keyword>
<evidence type="ECO:0000250" key="1">
    <source>
        <dbReference type="UniProtKB" id="Q9H773"/>
    </source>
</evidence>
<evidence type="ECO:0000256" key="2">
    <source>
        <dbReference type="SAM" id="MobiDB-lite"/>
    </source>
</evidence>
<evidence type="ECO:0000269" key="3">
    <source>
    </source>
</evidence>
<evidence type="ECO:0000269" key="4">
    <source>
    </source>
</evidence>
<evidence type="ECO:0000269" key="5">
    <source ref="6"/>
</evidence>
<evidence type="ECO:0000305" key="6"/>
<evidence type="ECO:0000305" key="7">
    <source>
    </source>
</evidence>
<evidence type="ECO:0000312" key="8">
    <source>
        <dbReference type="EMBL" id="AAF15970.1"/>
    </source>
</evidence>
<evidence type="ECO:0000312" key="9">
    <source>
        <dbReference type="MGI" id="MGI:1913672"/>
    </source>
</evidence>
<evidence type="ECO:0007744" key="10">
    <source>
        <dbReference type="PDB" id="2OIG"/>
    </source>
</evidence>
<evidence type="ECO:0007829" key="11">
    <source>
        <dbReference type="PDB" id="6SQW"/>
    </source>
</evidence>
<protein>
    <recommendedName>
        <fullName evidence="6">dCTP pyrophosphatase 1</fullName>
        <ecNumber evidence="3 4">3.6.1.12</ecNumber>
    </recommendedName>
    <alternativeName>
        <fullName>Deoxycytidine-triphosphatase 1</fullName>
        <shortName>dCTPase 1</shortName>
    </alternativeName>
    <alternativeName>
        <fullName evidence="8">RS21-C6</fullName>
    </alternativeName>
</protein>
<sequence length="170" mass="18795">MSTAGDGERGTVGQEDSAAARPFRFSPEPTLEDIRRLHAEFAAERDWEQFHQPRNLLLALVGEVGELAELFQWKSDTEPGPQAWPPKERAALQEELSDVLIYLVALAARCHVDLPQAVISKMDTNRQRYPVHLSRGSACKYTDLPRGTISENQAVGAGDPASELRDQAST</sequence>
<proteinExistence type="evidence at protein level"/>
<organism>
    <name type="scientific">Mus musculus</name>
    <name type="common">Mouse</name>
    <dbReference type="NCBI Taxonomy" id="10090"/>
    <lineage>
        <taxon>Eukaryota</taxon>
        <taxon>Metazoa</taxon>
        <taxon>Chordata</taxon>
        <taxon>Craniata</taxon>
        <taxon>Vertebrata</taxon>
        <taxon>Euteleostomi</taxon>
        <taxon>Mammalia</taxon>
        <taxon>Eutheria</taxon>
        <taxon>Euarchontoglires</taxon>
        <taxon>Glires</taxon>
        <taxon>Rodentia</taxon>
        <taxon>Myomorpha</taxon>
        <taxon>Muroidea</taxon>
        <taxon>Muridae</taxon>
        <taxon>Murinae</taxon>
        <taxon>Mus</taxon>
        <taxon>Mus</taxon>
    </lineage>
</organism>
<gene>
    <name evidence="9" type="primary">Dctpp1</name>
    <name evidence="8" type="synonym">Tdrg-TL1</name>
</gene>
<name>DCTP1_MOUSE</name>
<dbReference type="EC" id="3.6.1.12" evidence="3 4"/>
<dbReference type="EMBL" id="AF110764">
    <property type="protein sequence ID" value="AAF15970.1"/>
    <property type="molecule type" value="mRNA"/>
</dbReference>
<dbReference type="EMBL" id="AK003643">
    <property type="protein sequence ID" value="BAB22909.1"/>
    <property type="molecule type" value="mRNA"/>
</dbReference>
<dbReference type="EMBL" id="AK010508">
    <property type="protein sequence ID" value="BAB26992.1"/>
    <property type="molecule type" value="mRNA"/>
</dbReference>
<dbReference type="EMBL" id="AK010606">
    <property type="protein sequence ID" value="BAB27056.1"/>
    <property type="molecule type" value="mRNA"/>
</dbReference>
<dbReference type="EMBL" id="BC004623">
    <property type="protein sequence ID" value="AAH04623.1"/>
    <property type="molecule type" value="mRNA"/>
</dbReference>
<dbReference type="CCDS" id="CCDS21862.1"/>
<dbReference type="RefSeq" id="NP_075692.1">
    <property type="nucleotide sequence ID" value="NM_023203.1"/>
</dbReference>
<dbReference type="PDB" id="2A3Q">
    <property type="method" value="X-ray"/>
    <property type="resolution" value="2.32 A"/>
    <property type="chains" value="A/B=1-170"/>
</dbReference>
<dbReference type="PDB" id="2OIE">
    <property type="method" value="X-ray"/>
    <property type="resolution" value="2.20 A"/>
    <property type="chains" value="A/B/C/D=21-126"/>
</dbReference>
<dbReference type="PDB" id="2OIG">
    <property type="method" value="X-ray"/>
    <property type="resolution" value="3.30 A"/>
    <property type="chains" value="A/B/C/D=21-126"/>
</dbReference>
<dbReference type="PDB" id="2Q4P">
    <property type="method" value="X-ray"/>
    <property type="resolution" value="2.32 A"/>
    <property type="chains" value="A/B=1-170"/>
</dbReference>
<dbReference type="PDB" id="6SQW">
    <property type="method" value="X-ray"/>
    <property type="resolution" value="1.80 A"/>
    <property type="chains" value="A/D=1-170"/>
</dbReference>
<dbReference type="PDB" id="6SQY">
    <property type="method" value="X-ray"/>
    <property type="resolution" value="1.90 A"/>
    <property type="chains" value="A/D=1-170"/>
</dbReference>
<dbReference type="PDB" id="6SQZ">
    <property type="method" value="X-ray"/>
    <property type="resolution" value="1.90 A"/>
    <property type="chains" value="A/D=1-170"/>
</dbReference>
<dbReference type="PDBsum" id="2A3Q"/>
<dbReference type="PDBsum" id="2OIE"/>
<dbReference type="PDBsum" id="2OIG"/>
<dbReference type="PDBsum" id="2Q4P"/>
<dbReference type="PDBsum" id="6SQW"/>
<dbReference type="PDBsum" id="6SQY"/>
<dbReference type="PDBsum" id="6SQZ"/>
<dbReference type="SMR" id="Q9QY93"/>
<dbReference type="BioGRID" id="211463">
    <property type="interactions" value="1"/>
</dbReference>
<dbReference type="FunCoup" id="Q9QY93">
    <property type="interactions" value="1260"/>
</dbReference>
<dbReference type="IntAct" id="Q9QY93">
    <property type="interactions" value="1"/>
</dbReference>
<dbReference type="STRING" id="10090.ENSMUSP00000047845"/>
<dbReference type="PhosphoSitePlus" id="Q9QY93"/>
<dbReference type="SwissPalm" id="Q9QY93"/>
<dbReference type="PaxDb" id="10090-ENSMUSP00000047845"/>
<dbReference type="PeptideAtlas" id="Q9QY93"/>
<dbReference type="ProteomicsDB" id="279606"/>
<dbReference type="Pumba" id="Q9QY93"/>
<dbReference type="Antibodypedia" id="1233">
    <property type="antibodies" value="127 antibodies from 23 providers"/>
</dbReference>
<dbReference type="DNASU" id="66422"/>
<dbReference type="Ensembl" id="ENSMUST00000035276.5">
    <property type="protein sequence ID" value="ENSMUSP00000047845.5"/>
    <property type="gene ID" value="ENSMUSG00000042462.5"/>
</dbReference>
<dbReference type="GeneID" id="66422"/>
<dbReference type="KEGG" id="mmu:66422"/>
<dbReference type="UCSC" id="uc009juw.2">
    <property type="organism name" value="mouse"/>
</dbReference>
<dbReference type="AGR" id="MGI:1913672"/>
<dbReference type="CTD" id="79077"/>
<dbReference type="MGI" id="MGI:1913672">
    <property type="gene designation" value="Dctpp1"/>
</dbReference>
<dbReference type="VEuPathDB" id="HostDB:ENSMUSG00000042462"/>
<dbReference type="eggNOG" id="ENOG502S210">
    <property type="taxonomic scope" value="Eukaryota"/>
</dbReference>
<dbReference type="GeneTree" id="ENSGT00390000017709"/>
<dbReference type="HOGENOM" id="CLU_110454_0_1_1"/>
<dbReference type="InParanoid" id="Q9QY93"/>
<dbReference type="OMA" id="FRDERNW"/>
<dbReference type="OrthoDB" id="411123at2759"/>
<dbReference type="PhylomeDB" id="Q9QY93"/>
<dbReference type="TreeFam" id="TF300237"/>
<dbReference type="BioCyc" id="MetaCyc:MONOMER-17900"/>
<dbReference type="BRENDA" id="3.6.1.12">
    <property type="organism ID" value="3474"/>
</dbReference>
<dbReference type="BioGRID-ORCS" id="66422">
    <property type="hits" value="1 hit in 78 CRISPR screens"/>
</dbReference>
<dbReference type="ChiTaRS" id="Dctpp1">
    <property type="organism name" value="mouse"/>
</dbReference>
<dbReference type="EvolutionaryTrace" id="Q9QY93"/>
<dbReference type="PRO" id="PR:Q9QY93"/>
<dbReference type="Proteomes" id="UP000000589">
    <property type="component" value="Chromosome 7"/>
</dbReference>
<dbReference type="RNAct" id="Q9QY93">
    <property type="molecule type" value="protein"/>
</dbReference>
<dbReference type="Bgee" id="ENSMUSG00000042462">
    <property type="expression patterns" value="Expressed in epiblast cell in embryo and 271 other cell types or tissues"/>
</dbReference>
<dbReference type="GO" id="GO:0005829">
    <property type="term" value="C:cytosol"/>
    <property type="evidence" value="ECO:0000314"/>
    <property type="project" value="UniProtKB"/>
</dbReference>
<dbReference type="GO" id="GO:0047840">
    <property type="term" value="F:dCTP diphosphatase activity"/>
    <property type="evidence" value="ECO:0007669"/>
    <property type="project" value="UniProtKB-EC"/>
</dbReference>
<dbReference type="GO" id="GO:0042802">
    <property type="term" value="F:identical protein binding"/>
    <property type="evidence" value="ECO:0000353"/>
    <property type="project" value="MGI"/>
</dbReference>
<dbReference type="GO" id="GO:0000287">
    <property type="term" value="F:magnesium ion binding"/>
    <property type="evidence" value="ECO:0000314"/>
    <property type="project" value="UniProtKB"/>
</dbReference>
<dbReference type="GO" id="GO:0047429">
    <property type="term" value="F:nucleoside triphosphate diphosphatase activity"/>
    <property type="evidence" value="ECO:0000314"/>
    <property type="project" value="UniProtKB"/>
</dbReference>
<dbReference type="GO" id="GO:0032556">
    <property type="term" value="F:pyrimidine deoxyribonucleotide binding"/>
    <property type="evidence" value="ECO:0000314"/>
    <property type="project" value="MGI"/>
</dbReference>
<dbReference type="GO" id="GO:0016462">
    <property type="term" value="F:pyrophosphatase activity"/>
    <property type="evidence" value="ECO:0000314"/>
    <property type="project" value="MGI"/>
</dbReference>
<dbReference type="GO" id="GO:0006253">
    <property type="term" value="P:dCTP catabolic process"/>
    <property type="evidence" value="ECO:0007669"/>
    <property type="project" value="Ensembl"/>
</dbReference>
<dbReference type="GO" id="GO:0042262">
    <property type="term" value="P:DNA protection"/>
    <property type="evidence" value="ECO:0000250"/>
    <property type="project" value="UniProtKB"/>
</dbReference>
<dbReference type="GO" id="GO:0009143">
    <property type="term" value="P:nucleoside triphosphate catabolic process"/>
    <property type="evidence" value="ECO:0000314"/>
    <property type="project" value="UniProtKB"/>
</dbReference>
<dbReference type="CDD" id="cd11537">
    <property type="entry name" value="NTP-PPase_RS21-C6_like"/>
    <property type="match status" value="1"/>
</dbReference>
<dbReference type="FunFam" id="1.10.287.1080:FF:000004">
    <property type="entry name" value="dCTP pyrophosphatase 1"/>
    <property type="match status" value="1"/>
</dbReference>
<dbReference type="Gene3D" id="1.10.287.1080">
    <property type="entry name" value="MazG-like"/>
    <property type="match status" value="1"/>
</dbReference>
<dbReference type="InterPro" id="IPR052555">
    <property type="entry name" value="dCTP_Pyrophosphatase"/>
</dbReference>
<dbReference type="InterPro" id="IPR025984">
    <property type="entry name" value="DCTPP"/>
</dbReference>
<dbReference type="PANTHER" id="PTHR46523">
    <property type="entry name" value="DCTP PYROPHOSPHATASE 1"/>
    <property type="match status" value="1"/>
</dbReference>
<dbReference type="PANTHER" id="PTHR46523:SF1">
    <property type="entry name" value="DCTP PYROPHOSPHATASE 1"/>
    <property type="match status" value="1"/>
</dbReference>
<dbReference type="Pfam" id="PF12643">
    <property type="entry name" value="MazG-like"/>
    <property type="match status" value="1"/>
</dbReference>
<dbReference type="SUPFAM" id="SSF101386">
    <property type="entry name" value="all-alpha NTP pyrophosphatases"/>
    <property type="match status" value="1"/>
</dbReference>
<accession>Q9QY93</accession>
<comment type="function">
    <text evidence="3 4">Hydrolyzes deoxynucleoside triphosphates (dNTPs) to the corresponding nucleoside monophosphates. Has a strong preference for dCTP and its analogs including 5-iodo-dCTP and 5-methyl-dCTP for which it may even have a higher efficiency. May protect DNA or RNA against the incorporation of these genotoxic nucleotide analogs through their catabolism.</text>
</comment>
<comment type="catalytic activity">
    <reaction evidence="3 4">
        <text>dCTP + H2O = dCMP + diphosphate + H(+)</text>
        <dbReference type="Rhea" id="RHEA:22636"/>
        <dbReference type="ChEBI" id="CHEBI:15377"/>
        <dbReference type="ChEBI" id="CHEBI:15378"/>
        <dbReference type="ChEBI" id="CHEBI:33019"/>
        <dbReference type="ChEBI" id="CHEBI:57566"/>
        <dbReference type="ChEBI" id="CHEBI:61481"/>
        <dbReference type="EC" id="3.6.1.12"/>
    </reaction>
</comment>
<comment type="cofactor">
    <cofactor evidence="3">
        <name>Mg(2+)</name>
        <dbReference type="ChEBI" id="CHEBI:18420"/>
    </cofactor>
    <text evidence="3">Probably binds two or three Mg(2+) ions per subunit.</text>
</comment>
<comment type="activity regulation">
    <text evidence="3">Inhibited by divalent calcium or cadmium ions.</text>
</comment>
<comment type="biophysicochemical properties">
    <kinetics>
        <KM evidence="3 4">0.16 mM for 5-methyl-dCTP (at pH 9.0)</KM>
        <KM evidence="3 4">44 uM for dCTP (at pH 8.0)</KM>
        <KM evidence="3 4">118 uM for dATP (at pH 8.0)</KM>
        <KM evidence="3 4">407 uM for dTTP (at pH 8.0)</KM>
        <KM evidence="3 4">529 uM for CTP (at pH 8.0)</KM>
        <KM evidence="3 4">3.9 uM for 5-iodo-dCTP (at pH 8.0)</KM>
        <KM evidence="3 4">21.7 uM for 5-bromo-dCTP (at pH 8.0)</KM>
        <KM evidence="3 4">48.5 uM for 5-methyl-dCTP (at pH 8.0)</KM>
        <KM evidence="3 4">50 uM for 5-chloro-dCTP (at pH 8.0)</KM>
        <text evidence="3 4">Activity is higher with 5-iodo-dCTP, followed by 5-bromo-dCTP, dCTP, 5-methyl-dCTP and 5-chloro-dCTP. Hydrolyzes 2-chloro-dATP and 2-hydroxy-dATP with lower efficiency, and has even lower activity with dATP, dTTP and dUTP (in vitro). Does not hydrolyze ATP, UTP, ITP, GTP, dADP, dCDP or dGTP.</text>
    </kinetics>
    <phDependence>
        <text evidence="3 4">Optimum pH is 9-9.5.</text>
    </phDependence>
    <temperatureDependence>
        <text evidence="3 4">Optimum temperature is 60 degrees Celsius.</text>
    </temperatureDependence>
</comment>
<comment type="subunit">
    <text evidence="3 5">Homotetramer.</text>
</comment>
<comment type="subcellular location">
    <subcellularLocation>
        <location evidence="4">Cytoplasm</location>
        <location evidence="4">Cytosol</location>
    </subcellularLocation>
    <text evidence="4">Not detected in mitochondrion and nucleus.</text>
</comment>
<comment type="tissue specificity">
    <text evidence="4">Ubiquitous. Highly expressed in heart, liver, skeletal muscle, cerebellum, brain, and salivary gland.</text>
</comment>
<feature type="initiator methionine" description="Removed" evidence="1">
    <location>
        <position position="1"/>
    </location>
</feature>
<feature type="chain" id="PRO_0000291770" description="dCTP pyrophosphatase 1">
    <location>
        <begin position="2"/>
        <end position="170"/>
    </location>
</feature>
<feature type="region of interest" description="Disordered" evidence="2">
    <location>
        <begin position="1"/>
        <end position="25"/>
    </location>
</feature>
<feature type="region of interest" description="Disordered" evidence="2">
    <location>
        <begin position="150"/>
        <end position="170"/>
    </location>
</feature>
<feature type="binding site" evidence="3 10">
    <location>
        <position position="38"/>
    </location>
    <ligand>
        <name>substrate</name>
    </ligand>
</feature>
<feature type="binding site" evidence="3 10">
    <location>
        <begin position="47"/>
        <end position="51"/>
    </location>
    <ligand>
        <name>substrate</name>
    </ligand>
</feature>
<feature type="binding site" evidence="7">
    <location>
        <position position="63"/>
    </location>
    <ligand>
        <name>Mg(2+)</name>
        <dbReference type="ChEBI" id="CHEBI:18420"/>
    </ligand>
</feature>
<feature type="binding site" evidence="7">
    <location>
        <position position="66"/>
    </location>
    <ligand>
        <name>Mg(2+)</name>
        <dbReference type="ChEBI" id="CHEBI:18420"/>
    </ligand>
</feature>
<feature type="binding site" evidence="3 10">
    <location>
        <position position="73"/>
    </location>
    <ligand>
        <name>substrate</name>
    </ligand>
</feature>
<feature type="binding site" evidence="7">
    <location>
        <position position="95"/>
    </location>
    <ligand>
        <name>Mg(2+)</name>
        <dbReference type="ChEBI" id="CHEBI:18420"/>
    </ligand>
</feature>
<feature type="binding site" evidence="7">
    <location>
        <position position="98"/>
    </location>
    <ligand>
        <name>Mg(2+)</name>
        <dbReference type="ChEBI" id="CHEBI:18420"/>
    </ligand>
</feature>
<feature type="binding site" evidence="7">
    <location>
        <position position="102"/>
    </location>
    <ligand>
        <name>substrate</name>
    </ligand>
</feature>
<feature type="modified residue" description="N-acetylserine" evidence="1">
    <location>
        <position position="2"/>
    </location>
</feature>
<feature type="modified residue" description="Phosphoserine" evidence="1">
    <location>
        <position position="2"/>
    </location>
</feature>
<feature type="mutagenesis site" description="Reduces affinity for substrate and catalytic activity by about 50%." evidence="3">
    <original>H</original>
    <variation>A</variation>
    <location>
        <position position="38"/>
    </location>
</feature>
<feature type="mutagenesis site" description="Reduces affinity for substrate and catalytic activity by about 50%." evidence="3">
    <original>W</original>
    <variation>I</variation>
    <location>
        <position position="47"/>
    </location>
</feature>
<feature type="mutagenesis site" description="Loss of activity." evidence="3">
    <original>E</original>
    <variation>Q</variation>
    <location>
        <position position="63"/>
    </location>
</feature>
<feature type="mutagenesis site" description="Loss of activity." evidence="3">
    <original>E</original>
    <variation>Q</variation>
    <location>
        <position position="66"/>
    </location>
</feature>
<feature type="mutagenesis site" description="Reduces affinity for substrate and catalytic activity by about 50%." evidence="3">
    <original>W</original>
    <variation>I</variation>
    <location>
        <position position="73"/>
    </location>
</feature>
<feature type="mutagenesis site" description="Loss of activity." evidence="3">
    <original>E</original>
    <variation>Q</variation>
    <location>
        <position position="95"/>
    </location>
</feature>
<feature type="mutagenesis site" description="Loss of activity." evidence="3">
    <original>D</original>
    <variation>N</variation>
    <location>
        <position position="98"/>
    </location>
</feature>
<feature type="mutagenesis site" description="Reduces affinity for substrate and catalytic activity by about 50%." evidence="3">
    <original>Y</original>
    <variation>I</variation>
    <location>
        <position position="102"/>
    </location>
</feature>
<feature type="helix" evidence="11">
    <location>
        <begin position="31"/>
        <end position="44"/>
    </location>
</feature>
<feature type="helix" evidence="11">
    <location>
        <begin position="48"/>
        <end position="50"/>
    </location>
</feature>
<feature type="helix" evidence="11">
    <location>
        <begin position="53"/>
        <end position="71"/>
    </location>
</feature>
<feature type="strand" evidence="11">
    <location>
        <begin position="76"/>
        <end position="78"/>
    </location>
</feature>
<feature type="helix" evidence="11">
    <location>
        <begin position="81"/>
        <end position="83"/>
    </location>
</feature>
<feature type="helix" evidence="11">
    <location>
        <begin position="86"/>
        <end position="109"/>
    </location>
</feature>
<feature type="helix" evidence="11">
    <location>
        <begin position="114"/>
        <end position="128"/>
    </location>
</feature>
<feature type="helix" evidence="11">
    <location>
        <begin position="131"/>
        <end position="133"/>
    </location>
</feature>